<organism>
    <name type="scientific">Oryza sativa subsp. japonica</name>
    <name type="common">Rice</name>
    <dbReference type="NCBI Taxonomy" id="39947"/>
    <lineage>
        <taxon>Eukaryota</taxon>
        <taxon>Viridiplantae</taxon>
        <taxon>Streptophyta</taxon>
        <taxon>Embryophyta</taxon>
        <taxon>Tracheophyta</taxon>
        <taxon>Spermatophyta</taxon>
        <taxon>Magnoliopsida</taxon>
        <taxon>Liliopsida</taxon>
        <taxon>Poales</taxon>
        <taxon>Poaceae</taxon>
        <taxon>BOP clade</taxon>
        <taxon>Oryzoideae</taxon>
        <taxon>Oryzeae</taxon>
        <taxon>Oryzinae</taxon>
        <taxon>Oryza</taxon>
        <taxon>Oryza sativa</taxon>
    </lineage>
</organism>
<keyword id="KW-0052">Apoplast</keyword>
<keyword id="KW-1015">Disulfide bond</keyword>
<keyword id="KW-0325">Glycoprotein</keyword>
<keyword id="KW-0464">Manganese</keyword>
<keyword id="KW-0479">Metal-binding</keyword>
<keyword id="KW-1185">Reference proteome</keyword>
<keyword id="KW-0964">Secreted</keyword>
<keyword id="KW-0732">Signal</keyword>
<evidence type="ECO:0000250" key="1"/>
<evidence type="ECO:0000255" key="2"/>
<evidence type="ECO:0000269" key="3">
    <source>
    </source>
</evidence>
<evidence type="ECO:0000305" key="4"/>
<name>GL82_ORYSJ</name>
<proteinExistence type="evidence at transcript level"/>
<feature type="signal peptide" evidence="2">
    <location>
        <begin position="1"/>
        <end position="24"/>
    </location>
</feature>
<feature type="chain" id="PRO_0000365514" description="Germin-like protein 8-2">
    <location>
        <begin position="25"/>
        <end position="221"/>
    </location>
</feature>
<feature type="domain" description="Cupin type-1" evidence="2">
    <location>
        <begin position="64"/>
        <end position="215"/>
    </location>
</feature>
<feature type="binding site" evidence="1">
    <location>
        <position position="112"/>
    </location>
    <ligand>
        <name>Mn(2+)</name>
        <dbReference type="ChEBI" id="CHEBI:29035"/>
    </ligand>
</feature>
<feature type="binding site" evidence="1">
    <location>
        <position position="114"/>
    </location>
    <ligand>
        <name>Mn(2+)</name>
        <dbReference type="ChEBI" id="CHEBI:29035"/>
    </ligand>
</feature>
<feature type="binding site" evidence="1">
    <location>
        <position position="119"/>
    </location>
    <ligand>
        <name>Mn(2+)</name>
        <dbReference type="ChEBI" id="CHEBI:29035"/>
    </ligand>
</feature>
<feature type="binding site" evidence="1">
    <location>
        <position position="160"/>
    </location>
    <ligand>
        <name>Mn(2+)</name>
        <dbReference type="ChEBI" id="CHEBI:29035"/>
    </ligand>
</feature>
<feature type="glycosylation site" description="N-linked (GlcNAc...) asparagine" evidence="2">
    <location>
        <position position="54"/>
    </location>
</feature>
<feature type="glycosylation site" description="N-linked (GlcNAc...) asparagine" evidence="2">
    <location>
        <position position="79"/>
    </location>
</feature>
<feature type="disulfide bond" evidence="1">
    <location>
        <begin position="34"/>
        <end position="49"/>
    </location>
</feature>
<feature type="sequence conflict" description="In Ref. 9; AAC04834." evidence="4" ref="9">
    <original>D</original>
    <variation>N</variation>
    <location>
        <position position="59"/>
    </location>
</feature>
<feature type="sequence conflict" description="In Ref. 1; AAB97470." evidence="4" ref="1">
    <original>T</original>
    <variation>A</variation>
    <location>
        <position position="72"/>
    </location>
</feature>
<feature type="sequence conflict" description="In Ref. 3; ABS44860." evidence="4" ref="3">
    <original>G</original>
    <variation>S</variation>
    <location>
        <position position="131"/>
    </location>
</feature>
<feature type="sequence conflict" description="In Ref. 1; AAB97470." evidence="4" ref="1">
    <original>T</original>
    <variation>M</variation>
    <location>
        <position position="134"/>
    </location>
</feature>
<feature type="sequence conflict" description="In Ref. 1; AAB97470." evidence="4" ref="1">
    <original>L</original>
    <variation>F</variation>
    <location>
        <position position="158"/>
    </location>
</feature>
<sequence>MASSSFSFLLVAALLGLASWKAIASDPSPLQDFCVADLNSPVRVNGFVCKNPMNASADDFFKAAMLDKPRDTNNKVGSNVTLVNVLQLPGLNTLGISIARLDFAPLGLNPPHTHPRATEIFTVLEGTLYVGFVTSNPDNRLLSKVLNKGDVFVFPEGLIHFQFNPNPHKPAVAIAALSSQNPGVITIANAVFGSNPPISDDILMKAFQVDKKIIDLLQAQF</sequence>
<dbReference type="EMBL" id="AF042489">
    <property type="protein sequence ID" value="AAB97470.1"/>
    <property type="molecule type" value="mRNA"/>
</dbReference>
<dbReference type="EMBL" id="EF122484">
    <property type="protein sequence ID" value="ABL74571.1"/>
    <property type="molecule type" value="mRNA"/>
</dbReference>
<dbReference type="EMBL" id="EF444528">
    <property type="protein sequence ID" value="ABS44860.1"/>
    <property type="molecule type" value="mRNA"/>
</dbReference>
<dbReference type="EMBL" id="AP005531">
    <property type="protein sequence ID" value="BAD05768.1"/>
    <property type="molecule type" value="Genomic_DNA"/>
</dbReference>
<dbReference type="EMBL" id="AP008214">
    <property type="protein sequence ID" value="BAF23070.1"/>
    <property type="molecule type" value="Genomic_DNA"/>
</dbReference>
<dbReference type="EMBL" id="AP014964">
    <property type="protein sequence ID" value="BAT04149.1"/>
    <property type="molecule type" value="Genomic_DNA"/>
</dbReference>
<dbReference type="EMBL" id="CM000145">
    <property type="protein sequence ID" value="EAZ41753.1"/>
    <property type="molecule type" value="Genomic_DNA"/>
</dbReference>
<dbReference type="EMBL" id="AK062862">
    <property type="protein sequence ID" value="BAG88472.1"/>
    <property type="molecule type" value="mRNA"/>
</dbReference>
<dbReference type="EMBL" id="AF032973">
    <property type="protein sequence ID" value="AAC04834.1"/>
    <property type="molecule type" value="mRNA"/>
</dbReference>
<dbReference type="PIR" id="T02591">
    <property type="entry name" value="T02591"/>
</dbReference>
<dbReference type="PIR" id="T02666">
    <property type="entry name" value="T02666"/>
</dbReference>
<dbReference type="RefSeq" id="XP_015648581.1">
    <property type="nucleotide sequence ID" value="XM_015793095.1"/>
</dbReference>
<dbReference type="SMR" id="Q6YZA9"/>
<dbReference type="FunCoup" id="Q6YZA9">
    <property type="interactions" value="40"/>
</dbReference>
<dbReference type="STRING" id="39947.Q6YZA9"/>
<dbReference type="GlyCosmos" id="Q6YZA9">
    <property type="glycosylation" value="2 sites, No reported glycans"/>
</dbReference>
<dbReference type="PaxDb" id="39947-Q6YZA9"/>
<dbReference type="EnsemblPlants" id="Os08t0189100-01">
    <property type="protein sequence ID" value="Os08t0189100-01"/>
    <property type="gene ID" value="Os08g0189100"/>
</dbReference>
<dbReference type="Gramene" id="Os08t0189100-01">
    <property type="protein sequence ID" value="Os08t0189100-01"/>
    <property type="gene ID" value="Os08g0189100"/>
</dbReference>
<dbReference type="KEGG" id="dosa:Os08g0189100"/>
<dbReference type="eggNOG" id="ENOG502QQ4A">
    <property type="taxonomic scope" value="Eukaryota"/>
</dbReference>
<dbReference type="HOGENOM" id="CLU_015790_0_0_1"/>
<dbReference type="InParanoid" id="Q6YZA9"/>
<dbReference type="OMA" id="INHASTM"/>
<dbReference type="OrthoDB" id="1850619at2759"/>
<dbReference type="Proteomes" id="UP000000763">
    <property type="component" value="Chromosome 8"/>
</dbReference>
<dbReference type="Proteomes" id="UP000007752">
    <property type="component" value="Chromosome 8"/>
</dbReference>
<dbReference type="Proteomes" id="UP000059680">
    <property type="component" value="Chromosome 8"/>
</dbReference>
<dbReference type="GO" id="GO:0048046">
    <property type="term" value="C:apoplast"/>
    <property type="evidence" value="ECO:0007669"/>
    <property type="project" value="UniProtKB-SubCell"/>
</dbReference>
<dbReference type="GO" id="GO:0030145">
    <property type="term" value="F:manganese ion binding"/>
    <property type="evidence" value="ECO:0007669"/>
    <property type="project" value="InterPro"/>
</dbReference>
<dbReference type="CDD" id="cd02241">
    <property type="entry name" value="cupin_OxOx"/>
    <property type="match status" value="1"/>
</dbReference>
<dbReference type="FunFam" id="2.60.120.10:FF:000005">
    <property type="entry name" value="Germin-like protein subfamily 1 member 8"/>
    <property type="match status" value="1"/>
</dbReference>
<dbReference type="Gene3D" id="2.60.120.10">
    <property type="entry name" value="Jelly Rolls"/>
    <property type="match status" value="1"/>
</dbReference>
<dbReference type="InterPro" id="IPR006045">
    <property type="entry name" value="Cupin_1"/>
</dbReference>
<dbReference type="InterPro" id="IPR001929">
    <property type="entry name" value="Germin"/>
</dbReference>
<dbReference type="InterPro" id="IPR019780">
    <property type="entry name" value="Germin_Mn-BS"/>
</dbReference>
<dbReference type="InterPro" id="IPR014710">
    <property type="entry name" value="RmlC-like_jellyroll"/>
</dbReference>
<dbReference type="InterPro" id="IPR011051">
    <property type="entry name" value="RmlC_Cupin_sf"/>
</dbReference>
<dbReference type="PANTHER" id="PTHR31238">
    <property type="entry name" value="GERMIN-LIKE PROTEIN SUBFAMILY 3 MEMBER 3"/>
    <property type="match status" value="1"/>
</dbReference>
<dbReference type="Pfam" id="PF00190">
    <property type="entry name" value="Cupin_1"/>
    <property type="match status" value="1"/>
</dbReference>
<dbReference type="PRINTS" id="PR00325">
    <property type="entry name" value="GERMIN"/>
</dbReference>
<dbReference type="SMART" id="SM00835">
    <property type="entry name" value="Cupin_1"/>
    <property type="match status" value="1"/>
</dbReference>
<dbReference type="SUPFAM" id="SSF51182">
    <property type="entry name" value="RmlC-like cupins"/>
    <property type="match status" value="1"/>
</dbReference>
<dbReference type="PROSITE" id="PS00725">
    <property type="entry name" value="GERMIN"/>
    <property type="match status" value="1"/>
</dbReference>
<reference key="1">
    <citation type="submission" date="1998-01" db="EMBL/GenBank/DDBJ databases">
        <title>Nucleotide sequence of rice germin-like protein.</title>
        <authorList>
            <person name="Yun C.-H."/>
            <person name="Park J.-H."/>
            <person name="Lee J.-H."/>
            <person name="Eun M.-Y."/>
        </authorList>
    </citation>
    <scope>NUCLEOTIDE SEQUENCE [MRNA]</scope>
    <source>
        <strain>cv. Nipponbare</strain>
    </source>
</reference>
<reference key="2">
    <citation type="submission" date="2006-11" db="EMBL/GenBank/DDBJ databases">
        <title>Molecular cloning of germin like protein genes in rice seeds.</title>
        <authorList>
            <person name="Yoon U.H."/>
            <person name="Kim Y.H."/>
        </authorList>
    </citation>
    <scope>NUCLEOTIDE SEQUENCE [MRNA]</scope>
    <source>
        <strain>cv. Ilpoombyeo</strain>
    </source>
</reference>
<reference key="3">
    <citation type="journal article" date="2009" name="Gene">
        <title>Screening and cloning of antimicrobial DNA sequences using a vital staining method.</title>
        <authorList>
            <person name="Cheng X."/>
            <person name="Liu G."/>
            <person name="Ye G."/>
            <person name="Wang H."/>
            <person name="Shen X."/>
            <person name="Wu K."/>
            <person name="Xie J."/>
            <person name="Altosaar I."/>
        </authorList>
    </citation>
    <scope>NUCLEOTIDE SEQUENCE [MRNA]</scope>
</reference>
<reference key="4">
    <citation type="journal article" date="2005" name="Nature">
        <title>The map-based sequence of the rice genome.</title>
        <authorList>
            <consortium name="International rice genome sequencing project (IRGSP)"/>
        </authorList>
    </citation>
    <scope>NUCLEOTIDE SEQUENCE [LARGE SCALE GENOMIC DNA]</scope>
    <source>
        <strain>cv. Nipponbare</strain>
    </source>
</reference>
<reference key="5">
    <citation type="journal article" date="2008" name="Nucleic Acids Res.">
        <title>The rice annotation project database (RAP-DB): 2008 update.</title>
        <authorList>
            <consortium name="The rice annotation project (RAP)"/>
        </authorList>
    </citation>
    <scope>GENOME REANNOTATION</scope>
    <source>
        <strain>cv. Nipponbare</strain>
    </source>
</reference>
<reference key="6">
    <citation type="journal article" date="2013" name="Rice">
        <title>Improvement of the Oryza sativa Nipponbare reference genome using next generation sequence and optical map data.</title>
        <authorList>
            <person name="Kawahara Y."/>
            <person name="de la Bastide M."/>
            <person name="Hamilton J.P."/>
            <person name="Kanamori H."/>
            <person name="McCombie W.R."/>
            <person name="Ouyang S."/>
            <person name="Schwartz D.C."/>
            <person name="Tanaka T."/>
            <person name="Wu J."/>
            <person name="Zhou S."/>
            <person name="Childs K.L."/>
            <person name="Davidson R.M."/>
            <person name="Lin H."/>
            <person name="Quesada-Ocampo L."/>
            <person name="Vaillancourt B."/>
            <person name="Sakai H."/>
            <person name="Lee S.S."/>
            <person name="Kim J."/>
            <person name="Numa H."/>
            <person name="Itoh T."/>
            <person name="Buell C.R."/>
            <person name="Matsumoto T."/>
        </authorList>
    </citation>
    <scope>GENOME REANNOTATION</scope>
    <source>
        <strain>cv. Nipponbare</strain>
    </source>
</reference>
<reference key="7">
    <citation type="journal article" date="2005" name="PLoS Biol.">
        <title>The genomes of Oryza sativa: a history of duplications.</title>
        <authorList>
            <person name="Yu J."/>
            <person name="Wang J."/>
            <person name="Lin W."/>
            <person name="Li S."/>
            <person name="Li H."/>
            <person name="Zhou J."/>
            <person name="Ni P."/>
            <person name="Dong W."/>
            <person name="Hu S."/>
            <person name="Zeng C."/>
            <person name="Zhang J."/>
            <person name="Zhang Y."/>
            <person name="Li R."/>
            <person name="Xu Z."/>
            <person name="Li S."/>
            <person name="Li X."/>
            <person name="Zheng H."/>
            <person name="Cong L."/>
            <person name="Lin L."/>
            <person name="Yin J."/>
            <person name="Geng J."/>
            <person name="Li G."/>
            <person name="Shi J."/>
            <person name="Liu J."/>
            <person name="Lv H."/>
            <person name="Li J."/>
            <person name="Wang J."/>
            <person name="Deng Y."/>
            <person name="Ran L."/>
            <person name="Shi X."/>
            <person name="Wang X."/>
            <person name="Wu Q."/>
            <person name="Li C."/>
            <person name="Ren X."/>
            <person name="Wang J."/>
            <person name="Wang X."/>
            <person name="Li D."/>
            <person name="Liu D."/>
            <person name="Zhang X."/>
            <person name="Ji Z."/>
            <person name="Zhao W."/>
            <person name="Sun Y."/>
            <person name="Zhang Z."/>
            <person name="Bao J."/>
            <person name="Han Y."/>
            <person name="Dong L."/>
            <person name="Ji J."/>
            <person name="Chen P."/>
            <person name="Wu S."/>
            <person name="Liu J."/>
            <person name="Xiao Y."/>
            <person name="Bu D."/>
            <person name="Tan J."/>
            <person name="Yang L."/>
            <person name="Ye C."/>
            <person name="Zhang J."/>
            <person name="Xu J."/>
            <person name="Zhou Y."/>
            <person name="Yu Y."/>
            <person name="Zhang B."/>
            <person name="Zhuang S."/>
            <person name="Wei H."/>
            <person name="Liu B."/>
            <person name="Lei M."/>
            <person name="Yu H."/>
            <person name="Li Y."/>
            <person name="Xu H."/>
            <person name="Wei S."/>
            <person name="He X."/>
            <person name="Fang L."/>
            <person name="Zhang Z."/>
            <person name="Zhang Y."/>
            <person name="Huang X."/>
            <person name="Su Z."/>
            <person name="Tong W."/>
            <person name="Li J."/>
            <person name="Tong Z."/>
            <person name="Li S."/>
            <person name="Ye J."/>
            <person name="Wang L."/>
            <person name="Fang L."/>
            <person name="Lei T."/>
            <person name="Chen C.-S."/>
            <person name="Chen H.-C."/>
            <person name="Xu Z."/>
            <person name="Li H."/>
            <person name="Huang H."/>
            <person name="Zhang F."/>
            <person name="Xu H."/>
            <person name="Li N."/>
            <person name="Zhao C."/>
            <person name="Li S."/>
            <person name="Dong L."/>
            <person name="Huang Y."/>
            <person name="Li L."/>
            <person name="Xi Y."/>
            <person name="Qi Q."/>
            <person name="Li W."/>
            <person name="Zhang B."/>
            <person name="Hu W."/>
            <person name="Zhang Y."/>
            <person name="Tian X."/>
            <person name="Jiao Y."/>
            <person name="Liang X."/>
            <person name="Jin J."/>
            <person name="Gao L."/>
            <person name="Zheng W."/>
            <person name="Hao B."/>
            <person name="Liu S.-M."/>
            <person name="Wang W."/>
            <person name="Yuan L."/>
            <person name="Cao M."/>
            <person name="McDermott J."/>
            <person name="Samudrala R."/>
            <person name="Wang J."/>
            <person name="Wong G.K.-S."/>
            <person name="Yang H."/>
        </authorList>
    </citation>
    <scope>NUCLEOTIDE SEQUENCE [LARGE SCALE GENOMIC DNA]</scope>
    <source>
        <strain>cv. Nipponbare</strain>
    </source>
</reference>
<reference key="8">
    <citation type="journal article" date="2003" name="Science">
        <title>Collection, mapping, and annotation of over 28,000 cDNA clones from japonica rice.</title>
        <authorList>
            <consortium name="The rice full-length cDNA consortium"/>
        </authorList>
    </citation>
    <scope>NUCLEOTIDE SEQUENCE [LARGE SCALE MRNA]</scope>
    <source>
        <strain>cv. Nipponbare</strain>
    </source>
</reference>
<reference key="9">
    <citation type="online journal article" date="1998" name="Plant Gene Register">
        <title>The rice genome expresses at least six different genes for oxalate oxidase/germin-like proteins.</title>
        <authorList>
            <person name="Membre N."/>
            <person name="Bernier F."/>
        </authorList>
        <locator>PGR98-021</locator>
    </citation>
    <scope>NUCLEOTIDE SEQUENCE [MRNA] OF 41-221</scope>
    <source>
        <strain>cv. Nipponbare</strain>
    </source>
</reference>
<reference key="10">
    <citation type="journal article" date="2009" name="Plant Physiol.">
        <title>A germin-like protein gene family functions as a complex quantitative trait locus conferring broad-spectrum disease resistance in rice.</title>
        <authorList>
            <person name="Manosalva P.M."/>
            <person name="Davidson R.M."/>
            <person name="Liu B."/>
            <person name="Zhu X."/>
            <person name="Hulbert S.H."/>
            <person name="Leung H."/>
            <person name="Leach J.E."/>
        </authorList>
    </citation>
    <scope>FUNCTION</scope>
</reference>
<gene>
    <name type="primary">GER3</name>
    <name type="synonym">GLP16</name>
    <name type="ordered locus">Os08g0189100</name>
    <name type="ordered locus">LOC_Os08g08960</name>
    <name type="ORF">B1099H05.23</name>
    <name type="ORF">OsJ_025236</name>
</gene>
<comment type="function">
    <text evidence="3">Plays a role in broad-spectrum disease resistance. Probably has no oxalate oxidase activity even if the active site is conserved.</text>
</comment>
<comment type="subunit">
    <text evidence="1">Oligomer (believed to be a pentamer but probably hexamer).</text>
</comment>
<comment type="subcellular location">
    <subcellularLocation>
        <location evidence="1">Secreted</location>
        <location evidence="1">Extracellular space</location>
        <location evidence="1">Apoplast</location>
    </subcellularLocation>
</comment>
<comment type="miscellaneous">
    <text>Member of the 12 germin-like protein gene cluster located on chromosome 8 in the major-effect quantitative trait loci (QTL) for fungal blast resistance. Partial suppression of the 12 germin-like protein genes increases susceptibility to the fungal pathogens causing rice blast and sheath blight diseases.</text>
</comment>
<comment type="similarity">
    <text evidence="4">Belongs to the germin family.</text>
</comment>
<protein>
    <recommendedName>
        <fullName>Germin-like protein 8-2</fullName>
    </recommendedName>
    <alternativeName>
        <fullName>Germin-like protein 16</fullName>
    </alternativeName>
    <alternativeName>
        <fullName>Germin-like protein 3</fullName>
        <shortName>OsGER3</shortName>
    </alternativeName>
</protein>
<accession>Q6YZA9</accession>
<accession>A0A0P0XCM3</accession>
<accession>B1NEV1</accession>
<accession>O48999</accession>
<accession>O49181</accession>